<dbReference type="EC" id="2.4.2.4" evidence="1"/>
<dbReference type="EMBL" id="CP000964">
    <property type="protein sequence ID" value="ACI08495.1"/>
    <property type="molecule type" value="Genomic_DNA"/>
</dbReference>
<dbReference type="SMR" id="B5Y276"/>
<dbReference type="KEGG" id="kpe:KPK_4776"/>
<dbReference type="HOGENOM" id="CLU_025040_0_1_6"/>
<dbReference type="UniPathway" id="UPA00578">
    <property type="reaction ID" value="UER00638"/>
</dbReference>
<dbReference type="Proteomes" id="UP000001734">
    <property type="component" value="Chromosome"/>
</dbReference>
<dbReference type="GO" id="GO:0005829">
    <property type="term" value="C:cytosol"/>
    <property type="evidence" value="ECO:0007669"/>
    <property type="project" value="TreeGrafter"/>
</dbReference>
<dbReference type="GO" id="GO:0004645">
    <property type="term" value="F:1,4-alpha-oligoglucan phosphorylase activity"/>
    <property type="evidence" value="ECO:0007669"/>
    <property type="project" value="InterPro"/>
</dbReference>
<dbReference type="GO" id="GO:0009032">
    <property type="term" value="F:thymidine phosphorylase activity"/>
    <property type="evidence" value="ECO:0007669"/>
    <property type="project" value="UniProtKB-UniRule"/>
</dbReference>
<dbReference type="GO" id="GO:0006206">
    <property type="term" value="P:pyrimidine nucleobase metabolic process"/>
    <property type="evidence" value="ECO:0007669"/>
    <property type="project" value="InterPro"/>
</dbReference>
<dbReference type="GO" id="GO:0046104">
    <property type="term" value="P:thymidine metabolic process"/>
    <property type="evidence" value="ECO:0007669"/>
    <property type="project" value="UniProtKB-UniRule"/>
</dbReference>
<dbReference type="FunFam" id="3.40.1030.10:FF:000001">
    <property type="entry name" value="Thymidine phosphorylase"/>
    <property type="match status" value="1"/>
</dbReference>
<dbReference type="FunFam" id="3.90.1170.30:FF:000001">
    <property type="entry name" value="Thymidine phosphorylase"/>
    <property type="match status" value="1"/>
</dbReference>
<dbReference type="Gene3D" id="3.40.1030.10">
    <property type="entry name" value="Nucleoside phosphorylase/phosphoribosyltransferase catalytic domain"/>
    <property type="match status" value="1"/>
</dbReference>
<dbReference type="Gene3D" id="3.90.1170.30">
    <property type="entry name" value="Pyrimidine nucleoside phosphorylase-like, C-terminal domain"/>
    <property type="match status" value="1"/>
</dbReference>
<dbReference type="Gene3D" id="1.20.970.10">
    <property type="entry name" value="Transferase, Pyrimidine Nucleoside Phosphorylase, Chain C"/>
    <property type="match status" value="1"/>
</dbReference>
<dbReference type="HAMAP" id="MF_01628">
    <property type="entry name" value="Thymid_phosp"/>
    <property type="match status" value="1"/>
</dbReference>
<dbReference type="InterPro" id="IPR000312">
    <property type="entry name" value="Glycosyl_Trfase_fam3"/>
</dbReference>
<dbReference type="InterPro" id="IPR017459">
    <property type="entry name" value="Glycosyl_Trfase_fam3_N_dom"/>
</dbReference>
<dbReference type="InterPro" id="IPR036320">
    <property type="entry name" value="Glycosyl_Trfase_fam3_N_dom_sf"/>
</dbReference>
<dbReference type="InterPro" id="IPR035902">
    <property type="entry name" value="Nuc_phospho_transferase"/>
</dbReference>
<dbReference type="InterPro" id="IPR036566">
    <property type="entry name" value="PYNP-like_C_sf"/>
</dbReference>
<dbReference type="InterPro" id="IPR013102">
    <property type="entry name" value="PYNP_C"/>
</dbReference>
<dbReference type="InterPro" id="IPR018090">
    <property type="entry name" value="Pyrmidine_PPas_bac/euk"/>
</dbReference>
<dbReference type="InterPro" id="IPR017872">
    <property type="entry name" value="Pyrmidine_PPase_CS"/>
</dbReference>
<dbReference type="InterPro" id="IPR000053">
    <property type="entry name" value="Thymidine/pyrmidine_PPase"/>
</dbReference>
<dbReference type="InterPro" id="IPR013465">
    <property type="entry name" value="Thymidine_Pase"/>
</dbReference>
<dbReference type="NCBIfam" id="NF004490">
    <property type="entry name" value="PRK05820.1"/>
    <property type="match status" value="1"/>
</dbReference>
<dbReference type="NCBIfam" id="TIGR02643">
    <property type="entry name" value="T_phosphoryl"/>
    <property type="match status" value="1"/>
</dbReference>
<dbReference type="NCBIfam" id="TIGR02644">
    <property type="entry name" value="Y_phosphoryl"/>
    <property type="match status" value="1"/>
</dbReference>
<dbReference type="PANTHER" id="PTHR10515">
    <property type="entry name" value="THYMIDINE PHOSPHORYLASE"/>
    <property type="match status" value="1"/>
</dbReference>
<dbReference type="PANTHER" id="PTHR10515:SF0">
    <property type="entry name" value="THYMIDINE PHOSPHORYLASE"/>
    <property type="match status" value="1"/>
</dbReference>
<dbReference type="Pfam" id="PF02885">
    <property type="entry name" value="Glycos_trans_3N"/>
    <property type="match status" value="1"/>
</dbReference>
<dbReference type="Pfam" id="PF00591">
    <property type="entry name" value="Glycos_transf_3"/>
    <property type="match status" value="1"/>
</dbReference>
<dbReference type="Pfam" id="PF07831">
    <property type="entry name" value="PYNP_C"/>
    <property type="match status" value="1"/>
</dbReference>
<dbReference type="PIRSF" id="PIRSF000478">
    <property type="entry name" value="TP_PyNP"/>
    <property type="match status" value="1"/>
</dbReference>
<dbReference type="SMART" id="SM00941">
    <property type="entry name" value="PYNP_C"/>
    <property type="match status" value="1"/>
</dbReference>
<dbReference type="SUPFAM" id="SSF52418">
    <property type="entry name" value="Nucleoside phosphorylase/phosphoribosyltransferase catalytic domain"/>
    <property type="match status" value="1"/>
</dbReference>
<dbReference type="SUPFAM" id="SSF47648">
    <property type="entry name" value="Nucleoside phosphorylase/phosphoribosyltransferase N-terminal domain"/>
    <property type="match status" value="1"/>
</dbReference>
<dbReference type="SUPFAM" id="SSF54680">
    <property type="entry name" value="Pyrimidine nucleoside phosphorylase C-terminal domain"/>
    <property type="match status" value="1"/>
</dbReference>
<dbReference type="PROSITE" id="PS00647">
    <property type="entry name" value="THYMID_PHOSPHORYLASE"/>
    <property type="match status" value="1"/>
</dbReference>
<keyword id="KW-0328">Glycosyltransferase</keyword>
<keyword id="KW-0808">Transferase</keyword>
<organism>
    <name type="scientific">Klebsiella pneumoniae (strain 342)</name>
    <dbReference type="NCBI Taxonomy" id="507522"/>
    <lineage>
        <taxon>Bacteria</taxon>
        <taxon>Pseudomonadati</taxon>
        <taxon>Pseudomonadota</taxon>
        <taxon>Gammaproteobacteria</taxon>
        <taxon>Enterobacterales</taxon>
        <taxon>Enterobacteriaceae</taxon>
        <taxon>Klebsiella/Raoultella group</taxon>
        <taxon>Klebsiella</taxon>
        <taxon>Klebsiella pneumoniae complex</taxon>
    </lineage>
</organism>
<gene>
    <name evidence="1" type="primary">deoA</name>
    <name type="ordered locus">KPK_4776</name>
</gene>
<name>TYPH_KLEP3</name>
<protein>
    <recommendedName>
        <fullName evidence="1">Thymidine phosphorylase</fullName>
        <ecNumber evidence="1">2.4.2.4</ecNumber>
    </recommendedName>
    <alternativeName>
        <fullName evidence="1">TdRPase</fullName>
    </alternativeName>
</protein>
<proteinExistence type="inferred from homology"/>
<reference key="1">
    <citation type="journal article" date="2008" name="PLoS Genet.">
        <title>Complete genome sequence of the N2-fixing broad host range endophyte Klebsiella pneumoniae 342 and virulence predictions verified in mice.</title>
        <authorList>
            <person name="Fouts D.E."/>
            <person name="Tyler H.L."/>
            <person name="DeBoy R.T."/>
            <person name="Daugherty S."/>
            <person name="Ren Q."/>
            <person name="Badger J.H."/>
            <person name="Durkin A.S."/>
            <person name="Huot H."/>
            <person name="Shrivastava S."/>
            <person name="Kothari S."/>
            <person name="Dodson R.J."/>
            <person name="Mohamoud Y."/>
            <person name="Khouri H."/>
            <person name="Roesch L.F.W."/>
            <person name="Krogfelt K.A."/>
            <person name="Struve C."/>
            <person name="Triplett E.W."/>
            <person name="Methe B.A."/>
        </authorList>
    </citation>
    <scope>NUCLEOTIDE SEQUENCE [LARGE SCALE GENOMIC DNA]</scope>
    <source>
        <strain>342</strain>
    </source>
</reference>
<feature type="chain" id="PRO_1000186262" description="Thymidine phosphorylase">
    <location>
        <begin position="1"/>
        <end position="440"/>
    </location>
</feature>
<accession>B5Y276</accession>
<evidence type="ECO:0000255" key="1">
    <source>
        <dbReference type="HAMAP-Rule" id="MF_01628"/>
    </source>
</evidence>
<comment type="function">
    <text evidence="1">The enzymes which catalyze the reversible phosphorolysis of pyrimidine nucleosides are involved in the degradation of these compounds and in their utilization as carbon and energy sources, or in the rescue of pyrimidine bases for nucleotide synthesis.</text>
</comment>
<comment type="catalytic activity">
    <reaction evidence="1">
        <text>thymidine + phosphate = 2-deoxy-alpha-D-ribose 1-phosphate + thymine</text>
        <dbReference type="Rhea" id="RHEA:16037"/>
        <dbReference type="ChEBI" id="CHEBI:17748"/>
        <dbReference type="ChEBI" id="CHEBI:17821"/>
        <dbReference type="ChEBI" id="CHEBI:43474"/>
        <dbReference type="ChEBI" id="CHEBI:57259"/>
        <dbReference type="EC" id="2.4.2.4"/>
    </reaction>
</comment>
<comment type="pathway">
    <text evidence="1">Pyrimidine metabolism; dTMP biosynthesis via salvage pathway; dTMP from thymine: step 1/2.</text>
</comment>
<comment type="subunit">
    <text evidence="1">Homodimer.</text>
</comment>
<comment type="similarity">
    <text evidence="1">Belongs to the thymidine/pyrimidine-nucleoside phosphorylase family.</text>
</comment>
<sequence length="440" mass="47101">MFLAQEIIRKKRDGHALSDEEIRFFINGIRDNTISEGQIAALAMTIFFHDMSMPERVSLTMAMRDSGTVLNWKSLNLNGPIVDKHSTGGVGDVTSLMLGPMVAACGGYVPMISGRGLGHTGGTLDKLEAIPGFDIFPDDNRFREIIKDVGVAIIGQTSSLAPADKRFYATRDITATVDSIPLITASILAKKLAEGLDALVMDVKVGSGAFMPTYELSAALAEAIVGVANGAGVRTTALLTDMNQVLASSAGNAVEVREAVQFLTGEYRNPRLFDVTMALCVEMLISGKLAADDAEARAKLQAVLDNGKAAEVFGRMVAAQKGPTDFVENYDHYLPTAMLSKAVYADTEGFISAMDTRALGMAVVSMGGGRRQASDTIDYSVGFTDMARLGDHVDGQRPLAVIHAKDENSWQEAAKAVKAAIKLDDKAPEITPTVYRRITE</sequence>